<feature type="chain" id="PRO_1000134888" description="4-hydroxy-tetrahydrodipicolinate synthase">
    <location>
        <begin position="1"/>
        <end position="292"/>
    </location>
</feature>
<feature type="active site" description="Proton donor/acceptor" evidence="1">
    <location>
        <position position="133"/>
    </location>
</feature>
<feature type="active site" description="Schiff-base intermediate with substrate" evidence="1">
    <location>
        <position position="161"/>
    </location>
</feature>
<feature type="binding site" evidence="1">
    <location>
        <position position="45"/>
    </location>
    <ligand>
        <name>pyruvate</name>
        <dbReference type="ChEBI" id="CHEBI:15361"/>
    </ligand>
</feature>
<feature type="binding site" evidence="1">
    <location>
        <position position="203"/>
    </location>
    <ligand>
        <name>pyruvate</name>
        <dbReference type="ChEBI" id="CHEBI:15361"/>
    </ligand>
</feature>
<feature type="site" description="Part of a proton relay during catalysis" evidence="1">
    <location>
        <position position="44"/>
    </location>
</feature>
<feature type="site" description="Part of a proton relay during catalysis" evidence="1">
    <location>
        <position position="107"/>
    </location>
</feature>
<gene>
    <name evidence="1" type="primary">dapA</name>
    <name type="ordered locus">VCM66_2080</name>
</gene>
<protein>
    <recommendedName>
        <fullName evidence="1">4-hydroxy-tetrahydrodipicolinate synthase</fullName>
        <shortName evidence="1">HTPA synthase</shortName>
        <ecNumber evidence="1">4.3.3.7</ecNumber>
    </recommendedName>
</protein>
<sequence length="292" mass="31374">MFSGSIVALITPFTPDGEVDYISLKKLVDFHVDAGTDAIVSVGTTGESATLTVEEHVKVVAKTVEFAEGRLPIIAGTGANATHEAVTFSRLLNNTGIAGYLSVTPYYNKPTQEGLFLHYNAIAQETDIPVILYNVPGRTAVDMRPETVARLSEIKNIVALKDATGDLSRVAKHREMCKEGFVLLSGDDATGLEFVKLGGQGVISVTNNIAAADMAKMMHLALDGKFDEAAIINQRLMTLHKNLFIESSPIPVKWAAHKMGLIANGDLRLPLTQLSEPARPIVAQALSEACIY</sequence>
<evidence type="ECO:0000255" key="1">
    <source>
        <dbReference type="HAMAP-Rule" id="MF_00418"/>
    </source>
</evidence>
<evidence type="ECO:0000305" key="2"/>
<reference key="1">
    <citation type="journal article" date="2008" name="PLoS ONE">
        <title>A recalibrated molecular clock and independent origins for the cholera pandemic clones.</title>
        <authorList>
            <person name="Feng L."/>
            <person name="Reeves P.R."/>
            <person name="Lan R."/>
            <person name="Ren Y."/>
            <person name="Gao C."/>
            <person name="Zhou Z."/>
            <person name="Ren Y."/>
            <person name="Cheng J."/>
            <person name="Wang W."/>
            <person name="Wang J."/>
            <person name="Qian W."/>
            <person name="Li D."/>
            <person name="Wang L."/>
        </authorList>
    </citation>
    <scope>NUCLEOTIDE SEQUENCE [LARGE SCALE GENOMIC DNA]</scope>
    <source>
        <strain>M66-2</strain>
    </source>
</reference>
<organism>
    <name type="scientific">Vibrio cholerae serotype O1 (strain M66-2)</name>
    <dbReference type="NCBI Taxonomy" id="579112"/>
    <lineage>
        <taxon>Bacteria</taxon>
        <taxon>Pseudomonadati</taxon>
        <taxon>Pseudomonadota</taxon>
        <taxon>Gammaproteobacteria</taxon>
        <taxon>Vibrionales</taxon>
        <taxon>Vibrionaceae</taxon>
        <taxon>Vibrio</taxon>
    </lineage>
</organism>
<accession>C3LPG2</accession>
<name>DAPA_VIBCM</name>
<keyword id="KW-0028">Amino-acid biosynthesis</keyword>
<keyword id="KW-0963">Cytoplasm</keyword>
<keyword id="KW-0220">Diaminopimelate biosynthesis</keyword>
<keyword id="KW-0456">Lyase</keyword>
<keyword id="KW-0457">Lysine biosynthesis</keyword>
<keyword id="KW-0704">Schiff base</keyword>
<comment type="function">
    <text evidence="1">Catalyzes the condensation of (S)-aspartate-beta-semialdehyde [(S)-ASA] and pyruvate to 4-hydroxy-tetrahydrodipicolinate (HTPA).</text>
</comment>
<comment type="catalytic activity">
    <reaction evidence="1">
        <text>L-aspartate 4-semialdehyde + pyruvate = (2S,4S)-4-hydroxy-2,3,4,5-tetrahydrodipicolinate + H2O + H(+)</text>
        <dbReference type="Rhea" id="RHEA:34171"/>
        <dbReference type="ChEBI" id="CHEBI:15361"/>
        <dbReference type="ChEBI" id="CHEBI:15377"/>
        <dbReference type="ChEBI" id="CHEBI:15378"/>
        <dbReference type="ChEBI" id="CHEBI:67139"/>
        <dbReference type="ChEBI" id="CHEBI:537519"/>
        <dbReference type="EC" id="4.3.3.7"/>
    </reaction>
</comment>
<comment type="pathway">
    <text evidence="1">Amino-acid biosynthesis; L-lysine biosynthesis via DAP pathway; (S)-tetrahydrodipicolinate from L-aspartate: step 3/4.</text>
</comment>
<comment type="subunit">
    <text evidence="1">Homotetramer; dimer of dimers.</text>
</comment>
<comment type="subcellular location">
    <subcellularLocation>
        <location evidence="1">Cytoplasm</location>
    </subcellularLocation>
</comment>
<comment type="similarity">
    <text evidence="1">Belongs to the DapA family.</text>
</comment>
<comment type="caution">
    <text evidence="2">Was originally thought to be a dihydrodipicolinate synthase (DHDPS), catalyzing the condensation of (S)-aspartate-beta-semialdehyde [(S)-ASA] and pyruvate to dihydrodipicolinate (DHDP). However, it was shown in E.coli that the product of the enzymatic reaction is not dihydrodipicolinate but in fact (4S)-4-hydroxy-2,3,4,5-tetrahydro-(2S)-dipicolinic acid (HTPA), and that the consecutive dehydration reaction leading to DHDP is not spontaneous but catalyzed by DapB.</text>
</comment>
<proteinExistence type="inferred from homology"/>
<dbReference type="EC" id="4.3.3.7" evidence="1"/>
<dbReference type="EMBL" id="CP001233">
    <property type="protein sequence ID" value="ACP06382.1"/>
    <property type="molecule type" value="Genomic_DNA"/>
</dbReference>
<dbReference type="RefSeq" id="WP_000491214.1">
    <property type="nucleotide sequence ID" value="NC_012578.1"/>
</dbReference>
<dbReference type="SMR" id="C3LPG2"/>
<dbReference type="GeneID" id="89513863"/>
<dbReference type="KEGG" id="vcm:VCM66_2080"/>
<dbReference type="HOGENOM" id="CLU_049343_7_1_6"/>
<dbReference type="UniPathway" id="UPA00034">
    <property type="reaction ID" value="UER00017"/>
</dbReference>
<dbReference type="Proteomes" id="UP000001217">
    <property type="component" value="Chromosome I"/>
</dbReference>
<dbReference type="GO" id="GO:0005829">
    <property type="term" value="C:cytosol"/>
    <property type="evidence" value="ECO:0007669"/>
    <property type="project" value="TreeGrafter"/>
</dbReference>
<dbReference type="GO" id="GO:0008840">
    <property type="term" value="F:4-hydroxy-tetrahydrodipicolinate synthase activity"/>
    <property type="evidence" value="ECO:0007669"/>
    <property type="project" value="UniProtKB-UniRule"/>
</dbReference>
<dbReference type="GO" id="GO:0019877">
    <property type="term" value="P:diaminopimelate biosynthetic process"/>
    <property type="evidence" value="ECO:0007669"/>
    <property type="project" value="UniProtKB-UniRule"/>
</dbReference>
<dbReference type="GO" id="GO:0009089">
    <property type="term" value="P:lysine biosynthetic process via diaminopimelate"/>
    <property type="evidence" value="ECO:0007669"/>
    <property type="project" value="UniProtKB-UniRule"/>
</dbReference>
<dbReference type="CDD" id="cd00950">
    <property type="entry name" value="DHDPS"/>
    <property type="match status" value="1"/>
</dbReference>
<dbReference type="FunFam" id="3.20.20.70:FF:000046">
    <property type="entry name" value="4-hydroxy-tetrahydrodipicolinate synthase"/>
    <property type="match status" value="1"/>
</dbReference>
<dbReference type="Gene3D" id="3.20.20.70">
    <property type="entry name" value="Aldolase class I"/>
    <property type="match status" value="1"/>
</dbReference>
<dbReference type="HAMAP" id="MF_00418">
    <property type="entry name" value="DapA"/>
    <property type="match status" value="1"/>
</dbReference>
<dbReference type="InterPro" id="IPR013785">
    <property type="entry name" value="Aldolase_TIM"/>
</dbReference>
<dbReference type="InterPro" id="IPR005263">
    <property type="entry name" value="DapA"/>
</dbReference>
<dbReference type="InterPro" id="IPR002220">
    <property type="entry name" value="DapA-like"/>
</dbReference>
<dbReference type="InterPro" id="IPR020625">
    <property type="entry name" value="Schiff_base-form_aldolases_AS"/>
</dbReference>
<dbReference type="InterPro" id="IPR020624">
    <property type="entry name" value="Schiff_base-form_aldolases_CS"/>
</dbReference>
<dbReference type="NCBIfam" id="TIGR00674">
    <property type="entry name" value="dapA"/>
    <property type="match status" value="1"/>
</dbReference>
<dbReference type="PANTHER" id="PTHR12128:SF66">
    <property type="entry name" value="4-HYDROXY-2-OXOGLUTARATE ALDOLASE, MITOCHONDRIAL"/>
    <property type="match status" value="1"/>
</dbReference>
<dbReference type="PANTHER" id="PTHR12128">
    <property type="entry name" value="DIHYDRODIPICOLINATE SYNTHASE"/>
    <property type="match status" value="1"/>
</dbReference>
<dbReference type="Pfam" id="PF00701">
    <property type="entry name" value="DHDPS"/>
    <property type="match status" value="1"/>
</dbReference>
<dbReference type="PIRSF" id="PIRSF001365">
    <property type="entry name" value="DHDPS"/>
    <property type="match status" value="1"/>
</dbReference>
<dbReference type="PRINTS" id="PR00146">
    <property type="entry name" value="DHPICSNTHASE"/>
</dbReference>
<dbReference type="SMART" id="SM01130">
    <property type="entry name" value="DHDPS"/>
    <property type="match status" value="1"/>
</dbReference>
<dbReference type="SUPFAM" id="SSF51569">
    <property type="entry name" value="Aldolase"/>
    <property type="match status" value="1"/>
</dbReference>
<dbReference type="PROSITE" id="PS00665">
    <property type="entry name" value="DHDPS_1"/>
    <property type="match status" value="1"/>
</dbReference>
<dbReference type="PROSITE" id="PS00666">
    <property type="entry name" value="DHDPS_2"/>
    <property type="match status" value="1"/>
</dbReference>